<protein>
    <recommendedName>
        <fullName>Transforming protein rel polyprotein</fullName>
    </recommendedName>
    <alternativeName>
        <fullName>p58 V-rel</fullName>
    </alternativeName>
    <component>
        <recommendedName>
            <fullName>Env polyprotein N-terminal</fullName>
        </recommendedName>
    </component>
    <component>
        <recommendedName>
            <fullName>Transforming protein rel</fullName>
        </recommendedName>
    </component>
    <component>
        <recommendedName>
            <fullName>Env polyprotein C-terminal</fullName>
        </recommendedName>
    </component>
</protein>
<sequence>MDFLTNLRFTEGISEPYIEIFEQPRQRGTRFRYKCEGRSAGSIPGEHSTDNNKTFPSIQILNYFGKVKIRTTLVTKNEPYKPHPHDLVGKGCRDGYYEAEFGPERQVLSFQNLGIQCVKKKDLKESISLRISKKINPFNVPEEQLHNIDEYDLNVVRLCFQAFLPDEHGNYTLALPPLISNPIYDNRAPNTAELRICRVNKNCGSVKGGDEIFLLCDKVQKDDIEVRFVLGNWEAKGSFSQADVHRQVAIVFRTPPFLGDITEPITVKMQLRRPSDQAVSEPVDFRYLPDEEDPSGNKAKRQRSTLAWQKPIQDCGSAVTERPKAAPIPTVNPEGKLKKEPNMFSPTLMLPGLGTLSSSQMYPACSQMPTQPAQLGPGKQDTLHSCWQQLYSPSPSASSLLSLHSHSSFTAEVPQPGAQGSSSLPAYNPLNWPDEKNSSFYRNFGNTHGMGAALVSAAGMQSVSSSSIVQGTHQASATTASIMTMPRTPGEVPFLRQQVGYRS</sequence>
<keyword id="KW-1035">Host cytoplasm</keyword>
<keyword id="KW-0553">Oncogene</keyword>
<keyword id="KW-0597">Phosphoprotein</keyword>
<dbReference type="EMBL" id="X02759">
    <property type="protein sequence ID" value="CAA26534.1"/>
    <property type="molecule type" value="Genomic_RNA"/>
</dbReference>
<dbReference type="PIR" id="A93974">
    <property type="entry name" value="VCVDA"/>
</dbReference>
<dbReference type="SMR" id="P01126"/>
<dbReference type="GO" id="GO:0030430">
    <property type="term" value="C:host cell cytoplasm"/>
    <property type="evidence" value="ECO:0007669"/>
    <property type="project" value="UniProtKB-SubCell"/>
</dbReference>
<dbReference type="GO" id="GO:0000981">
    <property type="term" value="F:DNA-binding transcription factor activity, RNA polymerase II-specific"/>
    <property type="evidence" value="ECO:0007669"/>
    <property type="project" value="TreeGrafter"/>
</dbReference>
<dbReference type="GO" id="GO:0000978">
    <property type="term" value="F:RNA polymerase II cis-regulatory region sequence-specific DNA binding"/>
    <property type="evidence" value="ECO:0007669"/>
    <property type="project" value="TreeGrafter"/>
</dbReference>
<dbReference type="GO" id="GO:0007249">
    <property type="term" value="P:canonical NF-kappaB signal transduction"/>
    <property type="evidence" value="ECO:0007669"/>
    <property type="project" value="TreeGrafter"/>
</dbReference>
<dbReference type="GO" id="GO:0033554">
    <property type="term" value="P:cellular response to stress"/>
    <property type="evidence" value="ECO:0007669"/>
    <property type="project" value="TreeGrafter"/>
</dbReference>
<dbReference type="GO" id="GO:0045087">
    <property type="term" value="P:innate immune response"/>
    <property type="evidence" value="ECO:0007669"/>
    <property type="project" value="TreeGrafter"/>
</dbReference>
<dbReference type="GO" id="GO:0038061">
    <property type="term" value="P:non-canonical NF-kappaB signal transduction"/>
    <property type="evidence" value="ECO:0007669"/>
    <property type="project" value="TreeGrafter"/>
</dbReference>
<dbReference type="GO" id="GO:0045944">
    <property type="term" value="P:positive regulation of transcription by RNA polymerase II"/>
    <property type="evidence" value="ECO:0007669"/>
    <property type="project" value="TreeGrafter"/>
</dbReference>
<dbReference type="GO" id="GO:0034097">
    <property type="term" value="P:response to cytokine"/>
    <property type="evidence" value="ECO:0007669"/>
    <property type="project" value="TreeGrafter"/>
</dbReference>
<dbReference type="CDD" id="cd01177">
    <property type="entry name" value="IPT_NFkappaB"/>
    <property type="match status" value="1"/>
</dbReference>
<dbReference type="CDD" id="cd07933">
    <property type="entry name" value="RHD-n_c-Rel"/>
    <property type="match status" value="1"/>
</dbReference>
<dbReference type="FunFam" id="2.60.40.340:FF:000003">
    <property type="entry name" value="NFkB p65 transcription factor"/>
    <property type="match status" value="1"/>
</dbReference>
<dbReference type="FunFam" id="2.60.40.10:FF:000046">
    <property type="entry name" value="Nuclear factor NF-kappa-B p105 subunit"/>
    <property type="match status" value="1"/>
</dbReference>
<dbReference type="Gene3D" id="2.60.40.10">
    <property type="entry name" value="Immunoglobulins"/>
    <property type="match status" value="1"/>
</dbReference>
<dbReference type="Gene3D" id="2.60.40.340">
    <property type="entry name" value="Rel homology domain (RHD), DNA-binding domain"/>
    <property type="match status" value="1"/>
</dbReference>
<dbReference type="InterPro" id="IPR013783">
    <property type="entry name" value="Ig-like_fold"/>
</dbReference>
<dbReference type="InterPro" id="IPR014756">
    <property type="entry name" value="Ig_E-set"/>
</dbReference>
<dbReference type="InterPro" id="IPR002909">
    <property type="entry name" value="IPT_dom"/>
</dbReference>
<dbReference type="InterPro" id="IPR033926">
    <property type="entry name" value="IPT_NFkappaB"/>
</dbReference>
<dbReference type="InterPro" id="IPR000451">
    <property type="entry name" value="NFkB/Dor"/>
</dbReference>
<dbReference type="InterPro" id="IPR008967">
    <property type="entry name" value="p53-like_TF_DNA-bd_sf"/>
</dbReference>
<dbReference type="InterPro" id="IPR042845">
    <property type="entry name" value="RHD-n_c-Rel"/>
</dbReference>
<dbReference type="InterPro" id="IPR030492">
    <property type="entry name" value="RHD_CS"/>
</dbReference>
<dbReference type="InterPro" id="IPR032397">
    <property type="entry name" value="RHD_dimer"/>
</dbReference>
<dbReference type="InterPro" id="IPR011539">
    <property type="entry name" value="RHD_DNA_bind_dom"/>
</dbReference>
<dbReference type="InterPro" id="IPR037059">
    <property type="entry name" value="RHD_DNA_bind_dom_sf"/>
</dbReference>
<dbReference type="PANTHER" id="PTHR24169">
    <property type="entry name" value="NUCLEAR FACTOR NF-KAPPA-B PROTEIN"/>
    <property type="match status" value="1"/>
</dbReference>
<dbReference type="PANTHER" id="PTHR24169:SF4">
    <property type="entry name" value="PROTO-ONCOGENE C-REL"/>
    <property type="match status" value="1"/>
</dbReference>
<dbReference type="Pfam" id="PF16179">
    <property type="entry name" value="RHD_dimer"/>
    <property type="match status" value="1"/>
</dbReference>
<dbReference type="Pfam" id="PF00554">
    <property type="entry name" value="RHD_DNA_bind"/>
    <property type="match status" value="1"/>
</dbReference>
<dbReference type="PRINTS" id="PR00057">
    <property type="entry name" value="NFKBTNSCPFCT"/>
</dbReference>
<dbReference type="SMART" id="SM00429">
    <property type="entry name" value="IPT"/>
    <property type="match status" value="1"/>
</dbReference>
<dbReference type="SUPFAM" id="SSF81296">
    <property type="entry name" value="E set domains"/>
    <property type="match status" value="1"/>
</dbReference>
<dbReference type="SUPFAM" id="SSF49417">
    <property type="entry name" value="p53-like transcription factors"/>
    <property type="match status" value="1"/>
</dbReference>
<dbReference type="PROSITE" id="PS01204">
    <property type="entry name" value="REL_1"/>
    <property type="match status" value="1"/>
</dbReference>
<dbReference type="PROSITE" id="PS50254">
    <property type="entry name" value="REL_2"/>
    <property type="match status" value="1"/>
</dbReference>
<name>REL_AVIRE</name>
<feature type="chain" id="PRO_0000030307" description="Env polyprotein N-terminal">
    <location>
        <begin position="1"/>
        <end position="12"/>
    </location>
</feature>
<feature type="chain" id="PRO_0000030308" description="Transforming protein rel">
    <location>
        <begin position="13"/>
        <end position="484"/>
    </location>
</feature>
<feature type="chain" id="PRO_0000030309" description="Env polyprotein C-terminal">
    <location>
        <begin position="485"/>
        <end position="503"/>
    </location>
</feature>
<feature type="domain" description="RHD" evidence="2">
    <location>
        <begin position="16"/>
        <end position="305"/>
    </location>
</feature>
<feature type="region of interest" description="Disordered" evidence="3">
    <location>
        <begin position="286"/>
        <end position="306"/>
    </location>
</feature>
<feature type="region of interest" description="Disordered" evidence="3">
    <location>
        <begin position="318"/>
        <end position="342"/>
    </location>
</feature>
<feature type="short sequence motif" description="Nuclear localization signal" evidence="1">
    <location>
        <begin position="298"/>
        <end position="303"/>
    </location>
</feature>
<feature type="modified residue" description="Phosphoserine; by host PKA" evidence="1">
    <location>
        <position position="275"/>
    </location>
</feature>
<organismHost>
    <name type="scientific">Galliformes</name>
    <dbReference type="NCBI Taxonomy" id="8976"/>
</organismHost>
<proteinExistence type="inferred from homology"/>
<gene>
    <name type="primary">V-REL</name>
</gene>
<accession>P01126</accession>
<evidence type="ECO:0000255" key="1"/>
<evidence type="ECO:0000255" key="2">
    <source>
        <dbReference type="PROSITE-ProRule" id="PRU00265"/>
    </source>
</evidence>
<evidence type="ECO:0000256" key="3">
    <source>
        <dbReference type="SAM" id="MobiDB-lite"/>
    </source>
</evidence>
<organism>
    <name type="scientific">Avian reticuloendotheliosis virus</name>
    <dbReference type="NCBI Taxonomy" id="11636"/>
    <lineage>
        <taxon>Viruses</taxon>
        <taxon>Riboviria</taxon>
        <taxon>Pararnavirae</taxon>
        <taxon>Artverviricota</taxon>
        <taxon>Revtraviricetes</taxon>
        <taxon>Ortervirales</taxon>
        <taxon>Retroviridae</taxon>
        <taxon>Orthoretrovirinae</taxon>
        <taxon>Gammaretrovirus</taxon>
    </lineage>
</organism>
<comment type="function">
    <text>This transforming protein appears to have a protein-kinase activity.</text>
</comment>
<comment type="subcellular location">
    <subcellularLocation>
        <location>Host cytoplasm</location>
    </subcellularLocation>
</comment>
<reference key="1">
    <citation type="journal article" date="1983" name="Proc. Natl. Acad. Sci. U.S.A.">
        <title>Nucleotide sequence of v-rel: the oncogene of reticuloendotheliosis virus.</title>
        <authorList>
            <person name="Stephens R.M."/>
            <person name="Rice N.R."/>
            <person name="Hiebsch R.R."/>
            <person name="Bose H.R. Jr."/>
            <person name="Gilden R.V."/>
        </authorList>
    </citation>
    <scope>NUCLEOTIDE SEQUENCE [GENOMIC RNA]</scope>
</reference>
<reference key="2">
    <citation type="journal article" date="1984" name="J. Virol.">
        <title>Nucleic acid sequences of the oncogene v-rel in reticuloendotheliosis virus strain T and its cellular homolog, the proto-oncogene c-rel.</title>
        <authorList>
            <person name="Wilhelmsen K.C."/>
            <person name="Eggleton K."/>
            <person name="Temin H.M."/>
        </authorList>
    </citation>
    <scope>NUCLEOTIDE SEQUENCE [GENOMIC RNA]</scope>
    <source>
        <strain>T</strain>
    </source>
</reference>